<sequence>MNEVVAKKYVKAILSDVNSAQLAKFISNLSEISAAFEIEKFRNIISLPTLKNSAKAEFILSLVQDPSENFKNFIKLLGANKRLSLIPAILNEIKSEQTLLDNIYHGSVYGNFELNGEQLSALEDKFSKRFDAKVKLGGSKSDYNGIKVELDDLGVEASFSMDRLKTQMSEYILKAI</sequence>
<comment type="function">
    <text evidence="1">F(1)F(0) ATP synthase produces ATP from ADP in the presence of a proton or sodium gradient. F-type ATPases consist of two structural domains, F(1) containing the extramembraneous catalytic core and F(0) containing the membrane proton channel, linked together by a central stalk and a peripheral stalk. During catalysis, ATP synthesis in the catalytic domain of F(1) is coupled via a rotary mechanism of the central stalk subunits to proton translocation.</text>
</comment>
<comment type="function">
    <text evidence="1">This protein is part of the stalk that links CF(0) to CF(1). It either transmits conformational changes from CF(0) to CF(1) or is implicated in proton conduction.</text>
</comment>
<comment type="subunit">
    <text evidence="1">F-type ATPases have 2 components, F(1) - the catalytic core - and F(0) - the membrane proton channel. F(1) has five subunits: alpha(3), beta(3), gamma(1), delta(1), epsilon(1). F(0) has three main subunits: a(1), b(2) and c(10-14). The alpha and beta chains form an alternating ring which encloses part of the gamma chain. F(1) is attached to F(0) by a central stalk formed by the gamma and epsilon chains, while a peripheral stalk is formed by the delta and b chains.</text>
</comment>
<comment type="subcellular location">
    <subcellularLocation>
        <location evidence="1">Cell inner membrane</location>
        <topology evidence="1">Peripheral membrane protein</topology>
    </subcellularLocation>
</comment>
<comment type="similarity">
    <text evidence="1">Belongs to the ATPase delta chain family.</text>
</comment>
<organism>
    <name type="scientific">Campylobacter curvus (strain 525.92)</name>
    <dbReference type="NCBI Taxonomy" id="360105"/>
    <lineage>
        <taxon>Bacteria</taxon>
        <taxon>Pseudomonadati</taxon>
        <taxon>Campylobacterota</taxon>
        <taxon>Epsilonproteobacteria</taxon>
        <taxon>Campylobacterales</taxon>
        <taxon>Campylobacteraceae</taxon>
        <taxon>Campylobacter</taxon>
    </lineage>
</organism>
<gene>
    <name evidence="1" type="primary">atpH</name>
    <name type="ordered locus">Ccur92_15080</name>
    <name type="ORF">CCV52592_1735</name>
</gene>
<evidence type="ECO:0000255" key="1">
    <source>
        <dbReference type="HAMAP-Rule" id="MF_01416"/>
    </source>
</evidence>
<accession>A7H020</accession>
<proteinExistence type="inferred from homology"/>
<name>ATPD_CAMC5</name>
<reference key="1">
    <citation type="submission" date="2007-07" db="EMBL/GenBank/DDBJ databases">
        <title>Genome sequence of Campylobacter curvus 525.92 isolated from human feces.</title>
        <authorList>
            <person name="Fouts D.E."/>
            <person name="Mongodin E.F."/>
            <person name="Puiu D."/>
            <person name="Sebastian Y."/>
            <person name="Miller W.G."/>
            <person name="Mandrell R.E."/>
            <person name="Lastovica A.J."/>
            <person name="Nelson K.E."/>
        </authorList>
    </citation>
    <scope>NUCLEOTIDE SEQUENCE [LARGE SCALE GENOMIC DNA]</scope>
    <source>
        <strain>525.92</strain>
    </source>
</reference>
<feature type="chain" id="PRO_0000382070" description="ATP synthase subunit delta">
    <location>
        <begin position="1"/>
        <end position="176"/>
    </location>
</feature>
<protein>
    <recommendedName>
        <fullName evidence="1">ATP synthase subunit delta</fullName>
    </recommendedName>
    <alternativeName>
        <fullName evidence="1">ATP synthase F(1) sector subunit delta</fullName>
    </alternativeName>
    <alternativeName>
        <fullName evidence="1">F-type ATPase subunit delta</fullName>
        <shortName evidence="1">F-ATPase subunit delta</shortName>
    </alternativeName>
</protein>
<keyword id="KW-0066">ATP synthesis</keyword>
<keyword id="KW-0997">Cell inner membrane</keyword>
<keyword id="KW-1003">Cell membrane</keyword>
<keyword id="KW-0139">CF(1)</keyword>
<keyword id="KW-0375">Hydrogen ion transport</keyword>
<keyword id="KW-0406">Ion transport</keyword>
<keyword id="KW-0472">Membrane</keyword>
<keyword id="KW-1185">Reference proteome</keyword>
<keyword id="KW-0813">Transport</keyword>
<dbReference type="EMBL" id="CP000767">
    <property type="protein sequence ID" value="EAU01051.1"/>
    <property type="molecule type" value="Genomic_DNA"/>
</dbReference>
<dbReference type="RefSeq" id="WP_011992637.1">
    <property type="nucleotide sequence ID" value="NC_009715.2"/>
</dbReference>
<dbReference type="SMR" id="A7H020"/>
<dbReference type="STRING" id="360105.CCV52592_1735"/>
<dbReference type="KEGG" id="ccv:CCV52592_1735"/>
<dbReference type="HOGENOM" id="CLU_085114_3_1_7"/>
<dbReference type="OrthoDB" id="5339308at2"/>
<dbReference type="Proteomes" id="UP000006380">
    <property type="component" value="Chromosome"/>
</dbReference>
<dbReference type="GO" id="GO:0005886">
    <property type="term" value="C:plasma membrane"/>
    <property type="evidence" value="ECO:0007669"/>
    <property type="project" value="UniProtKB-SubCell"/>
</dbReference>
<dbReference type="GO" id="GO:0045259">
    <property type="term" value="C:proton-transporting ATP synthase complex"/>
    <property type="evidence" value="ECO:0007669"/>
    <property type="project" value="UniProtKB-KW"/>
</dbReference>
<dbReference type="GO" id="GO:0046933">
    <property type="term" value="F:proton-transporting ATP synthase activity, rotational mechanism"/>
    <property type="evidence" value="ECO:0007669"/>
    <property type="project" value="UniProtKB-UniRule"/>
</dbReference>
<dbReference type="Gene3D" id="1.10.520.20">
    <property type="entry name" value="N-terminal domain of the delta subunit of the F1F0-ATP synthase"/>
    <property type="match status" value="1"/>
</dbReference>
<dbReference type="HAMAP" id="MF_01416">
    <property type="entry name" value="ATP_synth_delta_bact"/>
    <property type="match status" value="1"/>
</dbReference>
<dbReference type="InterPro" id="IPR026015">
    <property type="entry name" value="ATP_synth_OSCP/delta_N_sf"/>
</dbReference>
<dbReference type="InterPro" id="IPR000711">
    <property type="entry name" value="ATPase_OSCP/dsu"/>
</dbReference>
<dbReference type="NCBIfam" id="NF006291">
    <property type="entry name" value="PRK08474.1"/>
    <property type="match status" value="1"/>
</dbReference>
<dbReference type="Pfam" id="PF00213">
    <property type="entry name" value="OSCP"/>
    <property type="match status" value="1"/>
</dbReference>
<dbReference type="SUPFAM" id="SSF47928">
    <property type="entry name" value="N-terminal domain of the delta subunit of the F1F0-ATP synthase"/>
    <property type="match status" value="1"/>
</dbReference>